<sequence>MKVLDLLTVLSASSLLSTFAAAESTATADSTTAASSTASCNPLKTTGCTPDTALATSFSEDFSSSSKWFTDLKHAGEIKYGSDGLSMTLAKRYDNPSLKSNFYIMYGKLEVILKAANGTGIVSSFYLQSDDLDEIDIEWVGGDNTQFQSNFFSKGDTTTYDRGEFHGVDTPTDKFHNYTLDWAMDKTTWYLDGESVRVLSNTSSEGYPQSPMYLMMGIWAGGDPDNAAGTIEWAGGETNYNDAPFTMYIEKVIVTDYSTGKKYTYGDQSGSWESIEADGGSIYGRYDQAQEDFAVLANGGSISSSSTSSSTVSSSASSTVSSSVSSTVSSSASSTVSSSVSSTVSSSSSVSSSSSTSPSSSTATSSKTLASSSVTTSSSISSFEKQSSSSSKKTVASSSTSESIISSTKTPATVSSTTRSTVAPTTQQSSVSSDSPVQDKGGVATSSNDVTSSTTQISSKYTSTIQSSSSEASSTNSVQISNGADLAQSLPREGKLFSVLVALLALL</sequence>
<accession>P53301</accession>
<accession>D6VUX2</accession>
<reference key="1">
    <citation type="journal article" date="1997" name="Yeast">
        <title>DNA sequence analysis of a 23,002 bp DNA fragment of the right arm of Saccharomyces cerevisiae chromosome VII.</title>
        <authorList>
            <person name="Arroyo J."/>
            <person name="Garcia-Gonzalez M."/>
            <person name="Garcia-Saez M.I."/>
            <person name="Sanchez-Perez M."/>
            <person name="Nombela C."/>
        </authorList>
    </citation>
    <scope>NUCLEOTIDE SEQUENCE [GENOMIC DNA]</scope>
    <source>
        <strain>ATCC 204508 / S288c</strain>
    </source>
</reference>
<reference key="2">
    <citation type="journal article" date="1997" name="Nature">
        <title>The nucleotide sequence of Saccharomyces cerevisiae chromosome VII.</title>
        <authorList>
            <person name="Tettelin H."/>
            <person name="Agostoni-Carbone M.L."/>
            <person name="Albermann K."/>
            <person name="Albers M."/>
            <person name="Arroyo J."/>
            <person name="Backes U."/>
            <person name="Barreiros T."/>
            <person name="Bertani I."/>
            <person name="Bjourson A.J."/>
            <person name="Brueckner M."/>
            <person name="Bruschi C.V."/>
            <person name="Carignani G."/>
            <person name="Castagnoli L."/>
            <person name="Cerdan E."/>
            <person name="Clemente M.L."/>
            <person name="Coblenz A."/>
            <person name="Coglievina M."/>
            <person name="Coissac E."/>
            <person name="Defoor E."/>
            <person name="Del Bino S."/>
            <person name="Delius H."/>
            <person name="Delneri D."/>
            <person name="de Wergifosse P."/>
            <person name="Dujon B."/>
            <person name="Durand P."/>
            <person name="Entian K.-D."/>
            <person name="Eraso P."/>
            <person name="Escribano V."/>
            <person name="Fabiani L."/>
            <person name="Fartmann B."/>
            <person name="Feroli F."/>
            <person name="Feuermann M."/>
            <person name="Frontali L."/>
            <person name="Garcia-Gonzalez M."/>
            <person name="Garcia-Saez M.I."/>
            <person name="Goffeau A."/>
            <person name="Guerreiro P."/>
            <person name="Hani J."/>
            <person name="Hansen M."/>
            <person name="Hebling U."/>
            <person name="Hernandez K."/>
            <person name="Heumann K."/>
            <person name="Hilger F."/>
            <person name="Hofmann B."/>
            <person name="Indge K.J."/>
            <person name="James C.M."/>
            <person name="Klima R."/>
            <person name="Koetter P."/>
            <person name="Kramer B."/>
            <person name="Kramer W."/>
            <person name="Lauquin G."/>
            <person name="Leuther H."/>
            <person name="Louis E.J."/>
            <person name="Maillier E."/>
            <person name="Marconi A."/>
            <person name="Martegani E."/>
            <person name="Mazon M.J."/>
            <person name="Mazzoni C."/>
            <person name="McReynolds A.D.K."/>
            <person name="Melchioretto P."/>
            <person name="Mewes H.-W."/>
            <person name="Minenkova O."/>
            <person name="Mueller-Auer S."/>
            <person name="Nawrocki A."/>
            <person name="Netter P."/>
            <person name="Neu R."/>
            <person name="Nombela C."/>
            <person name="Oliver S.G."/>
            <person name="Panzeri L."/>
            <person name="Paoluzi S."/>
            <person name="Plevani P."/>
            <person name="Portetelle D."/>
            <person name="Portillo F."/>
            <person name="Potier S."/>
            <person name="Purnelle B."/>
            <person name="Rieger M."/>
            <person name="Riles L."/>
            <person name="Rinaldi T."/>
            <person name="Robben J."/>
            <person name="Rodrigues-Pousada C."/>
            <person name="Rodriguez-Belmonte E."/>
            <person name="Rodriguez-Torres A.M."/>
            <person name="Rose M."/>
            <person name="Ruzzi M."/>
            <person name="Saliola M."/>
            <person name="Sanchez-Perez M."/>
            <person name="Schaefer B."/>
            <person name="Schaefer M."/>
            <person name="Scharfe M."/>
            <person name="Schmidheini T."/>
            <person name="Schreer A."/>
            <person name="Skala J."/>
            <person name="Souciet J.-L."/>
            <person name="Steensma H.Y."/>
            <person name="Talla E."/>
            <person name="Thierry A."/>
            <person name="Vandenbol M."/>
            <person name="van der Aart Q.J.M."/>
            <person name="Van Dyck L."/>
            <person name="Vanoni M."/>
            <person name="Verhasselt P."/>
            <person name="Voet M."/>
            <person name="Volckaert G."/>
            <person name="Wambutt R."/>
            <person name="Watson M.D."/>
            <person name="Weber N."/>
            <person name="Wedler E."/>
            <person name="Wedler H."/>
            <person name="Wipfli P."/>
            <person name="Wolf K."/>
            <person name="Wright L.F."/>
            <person name="Zaccaria P."/>
            <person name="Zimmermann M."/>
            <person name="Zollner A."/>
            <person name="Kleine K."/>
        </authorList>
    </citation>
    <scope>NUCLEOTIDE SEQUENCE [LARGE SCALE GENOMIC DNA]</scope>
    <source>
        <strain>ATCC 204508 / S288c</strain>
    </source>
</reference>
<reference key="3">
    <citation type="journal article" date="2014" name="G3 (Bethesda)">
        <title>The reference genome sequence of Saccharomyces cerevisiae: Then and now.</title>
        <authorList>
            <person name="Engel S.R."/>
            <person name="Dietrich F.S."/>
            <person name="Fisk D.G."/>
            <person name="Binkley G."/>
            <person name="Balakrishnan R."/>
            <person name="Costanzo M.C."/>
            <person name="Dwight S.S."/>
            <person name="Hitz B.C."/>
            <person name="Karra K."/>
            <person name="Nash R.S."/>
            <person name="Weng S."/>
            <person name="Wong E.D."/>
            <person name="Lloyd P."/>
            <person name="Skrzypek M.S."/>
            <person name="Miyasato S.R."/>
            <person name="Simison M."/>
            <person name="Cherry J.M."/>
        </authorList>
    </citation>
    <scope>GENOME REANNOTATION</scope>
    <source>
        <strain>ATCC 204508 / S288c</strain>
    </source>
</reference>
<reference key="4">
    <citation type="journal article" date="1998" name="Mol. Gen. Genet.">
        <title>Screening for glycosylphosphatidylinositol (GPI)-dependent cell wall proteins in Saccharomyces cerevisiae.</title>
        <authorList>
            <person name="Hamada K."/>
            <person name="Fukuchi S."/>
            <person name="Arisawa M."/>
            <person name="Baba M."/>
            <person name="Kitada K."/>
        </authorList>
    </citation>
    <scope>SUBCELLULAR LOCATION</scope>
</reference>
<reference key="5">
    <citation type="journal article" date="1999" name="Mol. Microbiol.">
        <title>Genome-wide analysis of gene expression regulated by the yeast cell wall integrity signalling pathway.</title>
        <authorList>
            <person name="Jung U.S."/>
            <person name="Levin D.E."/>
        </authorList>
    </citation>
    <scope>INDUCTION</scope>
</reference>
<reference key="6">
    <citation type="journal article" date="2000" name="Mol. Cell. Biol.">
        <title>A novel family of cell wall-related proteins regulated differently during the yeast life cycle.</title>
        <authorList>
            <person name="Rodriguez-Pena J.M."/>
            <person name="Cid V.J."/>
            <person name="Arroyo J."/>
            <person name="Nombela C."/>
        </authorList>
    </citation>
    <scope>FUNCTION</scope>
    <scope>SUBCELLULAR LOCATION</scope>
</reference>
<reference key="7">
    <citation type="journal article" date="2000" name="Mol. Gen. Genet.">
        <title>Up-regulation of genes encoding glycosylphosphatidylinositol (GPI)-attached proteins in response to cell wall damage caused by disruption of FKS1 in Saccharomyces cerevisiae.</title>
        <authorList>
            <person name="Terashima H."/>
            <person name="Yabuki N."/>
            <person name="Arisawa M."/>
            <person name="Hamada K."/>
            <person name="Kitada K."/>
        </authorList>
    </citation>
    <scope>INDUCTION</scope>
    <scope>SUBCELLULAR LOCATION</scope>
</reference>
<reference key="8">
    <citation type="journal article" date="2005" name="J. Biol. Chem.">
        <title>Comprehensive proteomic analysis of Saccharomyces cerevisiae cell walls: identification of proteins covalently attached via glycosylphosphatidylinositol remnants or mild alkali-sensitive linkages.</title>
        <authorList>
            <person name="Yin Q.Y."/>
            <person name="de Groot P.W.J."/>
            <person name="Dekker H.L."/>
            <person name="de Jong L."/>
            <person name="Klis F.M."/>
            <person name="de Koster C.G."/>
        </authorList>
    </citation>
    <scope>SUBCELLULAR LOCATION</scope>
    <scope>IDENTIFICATION BY MASS SPECTROMETRY</scope>
    <scope>GPI-ANCHOR</scope>
</reference>
<reference key="9">
    <citation type="journal article" date="2007" name="FEMS Yeast Res.">
        <title>Mass spectrometric quantitation of covalently bound cell wall proteins in Saccharomyces cerevisiae.</title>
        <authorList>
            <person name="Yin Q.Y."/>
            <person name="de Groot P.W.J."/>
            <person name="de Jong L."/>
            <person name="Klis F.M."/>
            <person name="de Koster C.G."/>
        </authorList>
    </citation>
    <scope>LEVEL OF PROTEIN EXPRESSION</scope>
    <scope>IDENTIFICATION BY MASS SPECTROMETRY</scope>
</reference>
<reference key="10">
    <citation type="journal article" date="2007" name="Mol. Microbiol.">
        <title>Crh1p and Crh2p are required for the cross-linking of chitin to beta(1-6)glucan in the Saccharomyces cerevisiae cell wall.</title>
        <authorList>
            <person name="Cabib E."/>
            <person name="Blanco N."/>
            <person name="Grau C."/>
            <person name="Rodriguez-Pena J.M."/>
            <person name="Arroyo J."/>
        </authorList>
    </citation>
    <scope>FUNCTION</scope>
    <scope>SUBCELLULAR LOCATION</scope>
    <scope>INDUCTION BY HEAT STRESS</scope>
</reference>
<reference key="11">
    <citation type="journal article" date="2008" name="J. Biol. Chem.">
        <title>Assembly of the yeast cell wall. Crh1p and Crh2p act as transglycosylases in vivo and in vitro.</title>
        <authorList>
            <person name="Cabib E."/>
            <person name="Farkas V."/>
            <person name="Kosik O."/>
            <person name="Blanco N."/>
            <person name="Arroyo J."/>
            <person name="McPhie P."/>
        </authorList>
    </citation>
    <scope>FUNCTION</scope>
    <scope>CATALYTIC ACTIVITY</scope>
</reference>
<reference key="12">
    <citation type="journal article" date="2009" name="Eukaryot. Cell">
        <title>Two novel techniques for determination of polysaccharide cross-links show that Crh1p and Crh2p attach chitin to both beta(1-6)- and beta(1-3)glucan in the Saccharomyces cerevisiae cell wall.</title>
        <authorList>
            <person name="Cabib E."/>
        </authorList>
    </citation>
    <scope>FUNCTION</scope>
    <scope>CATALYTIC ACTIVITY</scope>
</reference>
<reference key="13">
    <citation type="journal article" date="2013" name="Biochem. J.">
        <title>A novel fluorescence assay and catalytic properties of Crh1 and Crh2 yeast cell wall transglycosylases.</title>
        <authorList>
            <person name="Mazan M."/>
            <person name="Blanco N."/>
            <person name="Kovacova K."/>
            <person name="Firakova Z."/>
            <person name="Rehulka P."/>
            <person name="Farkas V."/>
            <person name="Arroyo J."/>
        </authorList>
    </citation>
    <scope>FUNCTION</scope>
    <scope>CATALYTIC ACTIVITY</scope>
    <scope>BIOPHYSICOCHEMICAL PROPERTIES</scope>
    <scope>SUBSTRATE SPECIFICITY</scope>
</reference>
<comment type="function">
    <text evidence="2 10 11 12">Dual chitinase/transglycosylase that plays a role in cell wall architecture (PubMed:18694928, PubMed:19734368, PubMed:23919454). Chitinase and transglycosylase activities are coupled (By similarity). Required for the polysaccharide cross-linking at the septa and the cell wall (PubMed:18694928, PubMed:19734368, PubMed:23919454). More specifically, transfers chitin to both beta(1-3)- and beta(1-6)glucan in the cell wall (PubMed:18694928, PubMed:19734368, PubMed:23919454). The minimal number of intact hexopyranose units required in the molecule of the acceptor oligosaccharide is two and the effectivity of the acceptor increased with the increasing length of its oligosaccharide chain (PubMed:23919454).</text>
</comment>
<comment type="catalytic activity">
    <reaction evidence="12">
        <text>Random endo-hydrolysis of N-acetyl-beta-D-glucosaminide (1-&gt;4)-beta-linkages in chitin and chitodextrins.</text>
        <dbReference type="EC" id="3.2.1.14"/>
    </reaction>
</comment>
<comment type="biophysicochemical properties">
    <phDependence>
        <text evidence="12">Optimum pH is 3.5.</text>
    </phDependence>
    <temperatureDependence>
        <text evidence="12">Optimum temperature is 37 degrees Celsius.</text>
    </temperatureDependence>
</comment>
<comment type="subcellular location">
    <subcellularLocation>
        <location evidence="8">Secreted</location>
        <location evidence="8">Cell wall</location>
    </subcellularLocation>
    <subcellularLocation>
        <location evidence="3">Membrane</location>
        <topology evidence="3">Lipid-anchor</topology>
        <topology evidence="3">GPI-anchor</topology>
    </subcellularLocation>
    <text evidence="8">Covalently-linked GPI-modified cell wall protein (GPI-CWP), localized particularly in chitin-rich areas. Found at the incipient bud site, around the septum area in later stages of budding, and in ascospore envelopes. Redistributes uniformly over the cell cortex upon heat stress.</text>
</comment>
<comment type="induction">
    <text evidence="6 7 8">Positively regulated by cell integrity signaling through MPK1 in response to cell wall perturbation. Induced by heat stress.</text>
</comment>
<comment type="PTM">
    <text evidence="16">The GPI-anchor is attached to the protein in the endoplasmic reticulum and serves to target the protein to the cell surface. There, the glucosamine-inositol phospholipid moiety is cleaved off and the GPI-modified mannoprotein is covalently attached via its lipidless GPI glycan remnant to the 1,6-beta-glucan of the outer cell wall layer.</text>
</comment>
<comment type="miscellaneous">
    <text evidence="9">Present with 44000 wall-bound molecules/cell in log phase YPD medium.</text>
</comment>
<comment type="similarity">
    <text evidence="16">Belongs to the glycosyl hydrolase 16 family. CRH1 subfamily.</text>
</comment>
<organism>
    <name type="scientific">Saccharomyces cerevisiae (strain ATCC 204508 / S288c)</name>
    <name type="common">Baker's yeast</name>
    <dbReference type="NCBI Taxonomy" id="559292"/>
    <lineage>
        <taxon>Eukaryota</taxon>
        <taxon>Fungi</taxon>
        <taxon>Dikarya</taxon>
        <taxon>Ascomycota</taxon>
        <taxon>Saccharomycotina</taxon>
        <taxon>Saccharomycetes</taxon>
        <taxon>Saccharomycetales</taxon>
        <taxon>Saccharomycetaceae</taxon>
        <taxon>Saccharomyces</taxon>
    </lineage>
</organism>
<protein>
    <recommendedName>
        <fullName evidence="13">Congo red hypersensitive protein 1</fullName>
    </recommendedName>
    <domain>
        <recommendedName>
            <fullName evidence="15">Chitinase CRH1</fullName>
            <ecNumber evidence="12">3.2.1.14</ecNumber>
        </recommendedName>
    </domain>
    <domain>
        <recommendedName>
            <fullName evidence="14">Chitin transglycosylase CRH1</fullName>
            <ecNumber evidence="10 11 12">2.4.-.-</ecNumber>
        </recommendedName>
    </domain>
</protein>
<feature type="signal peptide" evidence="3">
    <location>
        <begin position="1"/>
        <end position="22"/>
    </location>
</feature>
<feature type="chain" id="PRO_0000045430" description="Congo red hypersensitive protein 1">
    <location>
        <begin position="23"/>
        <end position="482"/>
    </location>
</feature>
<feature type="propeptide" id="PRO_0000045431" description="Removed in mature form" evidence="3">
    <location>
        <begin position="483"/>
        <end position="507"/>
    </location>
</feature>
<feature type="domain" description="GH16" evidence="4">
    <location>
        <begin position="34"/>
        <end position="260"/>
    </location>
</feature>
<feature type="region of interest" description="Disordered" evidence="5">
    <location>
        <begin position="329"/>
        <end position="368"/>
    </location>
</feature>
<feature type="region of interest" description="Disordered" evidence="5">
    <location>
        <begin position="381"/>
        <end position="478"/>
    </location>
</feature>
<feature type="compositionally biased region" description="Low complexity" evidence="5">
    <location>
        <begin position="381"/>
        <end position="439"/>
    </location>
</feature>
<feature type="compositionally biased region" description="Low complexity" evidence="5">
    <location>
        <begin position="451"/>
        <end position="477"/>
    </location>
</feature>
<feature type="active site" description="Nucleophile" evidence="1">
    <location>
        <position position="134"/>
    </location>
</feature>
<feature type="active site" description="Proton donor" evidence="1">
    <location>
        <position position="138"/>
    </location>
</feature>
<feature type="binding site" evidence="2">
    <location>
        <position position="138"/>
    </location>
    <ligand>
        <name>chitin</name>
        <dbReference type="ChEBI" id="CHEBI:17029"/>
    </ligand>
</feature>
<feature type="binding site" evidence="2">
    <location>
        <position position="219"/>
    </location>
    <ligand>
        <name>chitin</name>
        <dbReference type="ChEBI" id="CHEBI:17029"/>
    </ligand>
</feature>
<feature type="binding site" evidence="2">
    <location>
        <position position="230"/>
    </location>
    <ligand>
        <name>chitin</name>
        <dbReference type="ChEBI" id="CHEBI:17029"/>
    </ligand>
</feature>
<feature type="lipid moiety-binding region" description="GPI-anchor amidated asparagine" evidence="3">
    <location>
        <position position="482"/>
    </location>
</feature>
<feature type="glycosylation site" description="N-linked (GlcNAc...) asparagine" evidence="3">
    <location>
        <position position="117"/>
    </location>
</feature>
<feature type="glycosylation site" description="N-linked (GlcNAc...) asparagine" evidence="3">
    <location>
        <position position="177"/>
    </location>
</feature>
<feature type="glycosylation site" description="N-linked (GlcNAc...) asparagine" evidence="3">
    <location>
        <position position="201"/>
    </location>
</feature>
<feature type="disulfide bond" evidence="2">
    <location>
        <begin position="40"/>
        <end position="48"/>
    </location>
</feature>
<gene>
    <name evidence="13" type="primary">CRH1</name>
    <name type="ordered locus">YGR189C</name>
    <name type="ORF">G7553</name>
</gene>
<proteinExistence type="evidence at protein level"/>
<dbReference type="EC" id="3.2.1.14" evidence="12"/>
<dbReference type="EC" id="2.4.-.-" evidence="10 11 12"/>
<dbReference type="EMBL" id="Z72974">
    <property type="protein sequence ID" value="CAA97215.1"/>
    <property type="molecule type" value="Genomic_DNA"/>
</dbReference>
<dbReference type="EMBL" id="X99074">
    <property type="protein sequence ID" value="CAA67525.1"/>
    <property type="molecule type" value="Genomic_DNA"/>
</dbReference>
<dbReference type="EMBL" id="BK006941">
    <property type="protein sequence ID" value="DAA08283.1"/>
    <property type="molecule type" value="Genomic_DNA"/>
</dbReference>
<dbReference type="PIR" id="S64507">
    <property type="entry name" value="S64507"/>
</dbReference>
<dbReference type="RefSeq" id="NP_011705.1">
    <property type="nucleotide sequence ID" value="NM_001181318.1"/>
</dbReference>
<dbReference type="SMR" id="P53301"/>
<dbReference type="BioGRID" id="33442">
    <property type="interactions" value="61"/>
</dbReference>
<dbReference type="DIP" id="DIP-4360N"/>
<dbReference type="FunCoup" id="P53301">
    <property type="interactions" value="67"/>
</dbReference>
<dbReference type="IntAct" id="P53301">
    <property type="interactions" value="13"/>
</dbReference>
<dbReference type="STRING" id="4932.YGR189C"/>
<dbReference type="CAZy" id="GH16">
    <property type="family name" value="Glycoside Hydrolase Family 16"/>
</dbReference>
<dbReference type="GlyCosmos" id="P53301">
    <property type="glycosylation" value="3 sites, No reported glycans"/>
</dbReference>
<dbReference type="GlyGen" id="P53301">
    <property type="glycosylation" value="3 sites"/>
</dbReference>
<dbReference type="iPTMnet" id="P53301"/>
<dbReference type="PaxDb" id="4932-YGR189C"/>
<dbReference type="PeptideAtlas" id="P53301"/>
<dbReference type="EnsemblFungi" id="YGR189C_mRNA">
    <property type="protein sequence ID" value="YGR189C"/>
    <property type="gene ID" value="YGR189C"/>
</dbReference>
<dbReference type="GeneID" id="853102"/>
<dbReference type="KEGG" id="sce:YGR189C"/>
<dbReference type="AGR" id="SGD:S000003421"/>
<dbReference type="SGD" id="S000003421">
    <property type="gene designation" value="CRH1"/>
</dbReference>
<dbReference type="VEuPathDB" id="FungiDB:YGR189C"/>
<dbReference type="eggNOG" id="ENOG502QQ71">
    <property type="taxonomic scope" value="Eukaryota"/>
</dbReference>
<dbReference type="HOGENOM" id="CLU_027506_2_1_1"/>
<dbReference type="InParanoid" id="P53301"/>
<dbReference type="OMA" id="DDDNWEG"/>
<dbReference type="OrthoDB" id="4781at2759"/>
<dbReference type="BioCyc" id="YEAST:G3O-30879-MONOMER"/>
<dbReference type="BioGRID-ORCS" id="853102">
    <property type="hits" value="2 hits in 10 CRISPR screens"/>
</dbReference>
<dbReference type="PRO" id="PR:P53301"/>
<dbReference type="Proteomes" id="UP000002311">
    <property type="component" value="Chromosome VII"/>
</dbReference>
<dbReference type="RNAct" id="P53301">
    <property type="molecule type" value="protein"/>
</dbReference>
<dbReference type="GO" id="GO:0071944">
    <property type="term" value="C:cell periphery"/>
    <property type="evidence" value="ECO:0007005"/>
    <property type="project" value="SGD"/>
</dbReference>
<dbReference type="GO" id="GO:0005576">
    <property type="term" value="C:extracellular region"/>
    <property type="evidence" value="ECO:0007669"/>
    <property type="project" value="UniProtKB-KW"/>
</dbReference>
<dbReference type="GO" id="GO:0009277">
    <property type="term" value="C:fungal-type cell wall"/>
    <property type="evidence" value="ECO:0000314"/>
    <property type="project" value="SGD"/>
</dbReference>
<dbReference type="GO" id="GO:0000131">
    <property type="term" value="C:incipient cellular bud site"/>
    <property type="evidence" value="ECO:0000314"/>
    <property type="project" value="SGD"/>
</dbReference>
<dbReference type="GO" id="GO:0098552">
    <property type="term" value="C:side of membrane"/>
    <property type="evidence" value="ECO:0007669"/>
    <property type="project" value="UniProtKB-KW"/>
</dbReference>
<dbReference type="GO" id="GO:0016757">
    <property type="term" value="F:glycosyltransferase activity"/>
    <property type="evidence" value="ECO:0000314"/>
    <property type="project" value="SGD"/>
</dbReference>
<dbReference type="GO" id="GO:0004553">
    <property type="term" value="F:hydrolase activity, hydrolyzing O-glycosyl compounds"/>
    <property type="evidence" value="ECO:0007669"/>
    <property type="project" value="InterPro"/>
</dbReference>
<dbReference type="GO" id="GO:0005975">
    <property type="term" value="P:carbohydrate metabolic process"/>
    <property type="evidence" value="ECO:0007669"/>
    <property type="project" value="InterPro"/>
</dbReference>
<dbReference type="GO" id="GO:0006030">
    <property type="term" value="P:chitin metabolic process"/>
    <property type="evidence" value="ECO:0000315"/>
    <property type="project" value="SGD"/>
</dbReference>
<dbReference type="GO" id="GO:0031505">
    <property type="term" value="P:fungal-type cell wall organization"/>
    <property type="evidence" value="ECO:0000315"/>
    <property type="project" value="SGD"/>
</dbReference>
<dbReference type="CDD" id="cd02183">
    <property type="entry name" value="GH16_fungal_CRH1_transglycosylase"/>
    <property type="match status" value="1"/>
</dbReference>
<dbReference type="FunFam" id="2.60.120.200:FF:000162">
    <property type="entry name" value="Glycosidase"/>
    <property type="match status" value="1"/>
</dbReference>
<dbReference type="Gene3D" id="2.60.120.200">
    <property type="match status" value="1"/>
</dbReference>
<dbReference type="InterPro" id="IPR013320">
    <property type="entry name" value="ConA-like_dom_sf"/>
</dbReference>
<dbReference type="InterPro" id="IPR000757">
    <property type="entry name" value="GH16"/>
</dbReference>
<dbReference type="InterPro" id="IPR017168">
    <property type="entry name" value="Glyco_hydro_16_CRH1_prd"/>
</dbReference>
<dbReference type="InterPro" id="IPR050546">
    <property type="entry name" value="Glycosyl_Hydrlase_16"/>
</dbReference>
<dbReference type="PANTHER" id="PTHR10963:SF68">
    <property type="entry name" value="GLYCOSIDASE CRH1-RELATED"/>
    <property type="match status" value="1"/>
</dbReference>
<dbReference type="PANTHER" id="PTHR10963">
    <property type="entry name" value="GLYCOSYL HYDROLASE-RELATED"/>
    <property type="match status" value="1"/>
</dbReference>
<dbReference type="Pfam" id="PF00722">
    <property type="entry name" value="Glyco_hydro_16"/>
    <property type="match status" value="1"/>
</dbReference>
<dbReference type="PIRSF" id="PIRSF037299">
    <property type="entry name" value="Glycosidase_CRH1_prd"/>
    <property type="match status" value="1"/>
</dbReference>
<dbReference type="SUPFAM" id="SSF49899">
    <property type="entry name" value="Concanavalin A-like lectins/glucanases"/>
    <property type="match status" value="1"/>
</dbReference>
<dbReference type="PROSITE" id="PS51762">
    <property type="entry name" value="GH16_2"/>
    <property type="match status" value="1"/>
</dbReference>
<name>CRH1_YEAST</name>
<keyword id="KW-0134">Cell wall</keyword>
<keyword id="KW-0961">Cell wall biogenesis/degradation</keyword>
<keyword id="KW-1015">Disulfide bond</keyword>
<keyword id="KW-0325">Glycoprotein</keyword>
<keyword id="KW-0326">Glycosidase</keyword>
<keyword id="KW-0328">Glycosyltransferase</keyword>
<keyword id="KW-0336">GPI-anchor</keyword>
<keyword id="KW-0378">Hydrolase</keyword>
<keyword id="KW-0449">Lipoprotein</keyword>
<keyword id="KW-0472">Membrane</keyword>
<keyword id="KW-1185">Reference proteome</keyword>
<keyword id="KW-0964">Secreted</keyword>
<keyword id="KW-0732">Signal</keyword>
<keyword id="KW-0808">Transferase</keyword>
<evidence type="ECO:0000250" key="1">
    <source>
        <dbReference type="UniProtKB" id="P27051"/>
    </source>
</evidence>
<evidence type="ECO:0000250" key="2">
    <source>
        <dbReference type="UniProtKB" id="Q8J0P4"/>
    </source>
</evidence>
<evidence type="ECO:0000255" key="3"/>
<evidence type="ECO:0000255" key="4">
    <source>
        <dbReference type="PROSITE-ProRule" id="PRU01098"/>
    </source>
</evidence>
<evidence type="ECO:0000256" key="5">
    <source>
        <dbReference type="SAM" id="MobiDB-lite"/>
    </source>
</evidence>
<evidence type="ECO:0000269" key="6">
    <source>
    </source>
</evidence>
<evidence type="ECO:0000269" key="7">
    <source>
    </source>
</evidence>
<evidence type="ECO:0000269" key="8">
    <source>
    </source>
</evidence>
<evidence type="ECO:0000269" key="9">
    <source>
    </source>
</evidence>
<evidence type="ECO:0000269" key="10">
    <source>
    </source>
</evidence>
<evidence type="ECO:0000269" key="11">
    <source>
    </source>
</evidence>
<evidence type="ECO:0000269" key="12">
    <source>
    </source>
</evidence>
<evidence type="ECO:0000303" key="13">
    <source>
    </source>
</evidence>
<evidence type="ECO:0000303" key="14">
    <source>
    </source>
</evidence>
<evidence type="ECO:0000303" key="15">
    <source>
    </source>
</evidence>
<evidence type="ECO:0000305" key="16"/>